<accession>Q6NJ04</accession>
<protein>
    <recommendedName>
        <fullName evidence="1">Error-prone DNA polymerase</fullName>
        <ecNumber evidence="1">2.7.7.7</ecNumber>
    </recommendedName>
</protein>
<proteinExistence type="inferred from homology"/>
<feature type="chain" id="PRO_0000103376" description="Error-prone DNA polymerase">
    <location>
        <begin position="1"/>
        <end position="1039"/>
    </location>
</feature>
<name>DNAE2_CORDI</name>
<sequence length="1039" mass="113416">MVDWVSGVNGKPLKWSQLEGVLSGTYPQEFKLANVGGSGSGSEKIRYYSSQPFAELHAASYYHFLHGANSPQDMVAAACQQGMSALALIDRDGFYGAMEFAEAAATSGLPTVFGAELTLAPDRILTVLARGVEGYTSLSRLITQARMRGSKDVTIYPPLAEIVESMGKNCRFLLNHSWCTDESLLEIFYPDTVVLEYGVTMRPEDVDHHELLDSIRQRYGFMAIASAVPSAVDRVSARVAGAKQALAQRESLPQATPRLHPMGSTWMRGGDELAGSVDKQLLDASVEVARDCAFALDLVAPNLPRWPVPDEMAHLTGLVNARFDARYRGRSEDVKNQARAQIHHELAVIKELGFPGYFLIVDDIVSFCHTNNILCQGRGSAANSVVCFVLGITNVEPISTGLLFERFLSRDREGPPDIDIDIESGRRDAVITYVYDTYGRDNAAQVANVITYRTKAALRDAARALGYPNTSADAWSTNPDEAPNAVRFLAEQLKGQPRHLGIHAGGMVICDRPIADVVPTEWARKHGRSVVQWDKESCASAGLVKFDLLGLGMLEALHHMIDLVVETTGTTINLWEIDLAEPEIYTMLSNGDAVGVFQVESRAQLATLPRLRPREFFDLVVEVALVRPGPIQGGSVHPYIRRRNGLEAVTYEHPILERSLRKTLGVPLFQEQLMHIAVDAAGFSGGEADELRRAMGSRRSVDTMNRMKRRFFAGLRRNNITGDIAGILWNKIVAFVAYGFPESHSQSFASLVYFSAWFKYHHPAEFYVGLLRAQPMGFYSPQSLLADARRKELTILSHNINKSQVEATVENGAIRLGLNMIKGVGKTEAEAIVAHAPYRDIADLSRRAGLGVAVIEALARSGALETLGVGRRQALWQAGAAATEKAAMLPGLSMVSAPSLPGMNAFELIVADIAMTGVSSENPVALLRRQLELRGVIPASELLNCENARRILLAGVVTHRQRPQTAAGVTFLGLEDETGLANVVVSVGLWKRSRAVKVARAVLVRGVVHNADGVASVTADRVEELPFAEMMSAGSRDFR</sequence>
<evidence type="ECO:0000255" key="1">
    <source>
        <dbReference type="HAMAP-Rule" id="MF_01902"/>
    </source>
</evidence>
<gene>
    <name evidence="1" type="primary">dnaE2</name>
    <name type="ordered locus">DIP0612</name>
</gene>
<dbReference type="EC" id="2.7.7.7" evidence="1"/>
<dbReference type="EMBL" id="BX248355">
    <property type="protein sequence ID" value="CAE49129.1"/>
    <property type="molecule type" value="Genomic_DNA"/>
</dbReference>
<dbReference type="RefSeq" id="WP_010934420.1">
    <property type="nucleotide sequence ID" value="NC_002935.2"/>
</dbReference>
<dbReference type="SMR" id="Q6NJ04"/>
<dbReference type="STRING" id="257309.DIP0612"/>
<dbReference type="KEGG" id="cdi:DIP0612"/>
<dbReference type="HOGENOM" id="CLU_001600_4_0_11"/>
<dbReference type="Proteomes" id="UP000002198">
    <property type="component" value="Chromosome"/>
</dbReference>
<dbReference type="GO" id="GO:0005737">
    <property type="term" value="C:cytoplasm"/>
    <property type="evidence" value="ECO:0007669"/>
    <property type="project" value="UniProtKB-SubCell"/>
</dbReference>
<dbReference type="GO" id="GO:0008408">
    <property type="term" value="F:3'-5' exonuclease activity"/>
    <property type="evidence" value="ECO:0007669"/>
    <property type="project" value="InterPro"/>
</dbReference>
<dbReference type="GO" id="GO:0003887">
    <property type="term" value="F:DNA-directed DNA polymerase activity"/>
    <property type="evidence" value="ECO:0007669"/>
    <property type="project" value="UniProtKB-UniRule"/>
</dbReference>
<dbReference type="GO" id="GO:0006281">
    <property type="term" value="P:DNA repair"/>
    <property type="evidence" value="ECO:0007669"/>
    <property type="project" value="UniProtKB-UniRule"/>
</dbReference>
<dbReference type="GO" id="GO:0006260">
    <property type="term" value="P:DNA replication"/>
    <property type="evidence" value="ECO:0007669"/>
    <property type="project" value="UniProtKB-KW"/>
</dbReference>
<dbReference type="CDD" id="cd04485">
    <property type="entry name" value="DnaE_OBF"/>
    <property type="match status" value="1"/>
</dbReference>
<dbReference type="CDD" id="cd07431">
    <property type="entry name" value="PHP_PolIIIA"/>
    <property type="match status" value="1"/>
</dbReference>
<dbReference type="Gene3D" id="1.10.150.870">
    <property type="match status" value="1"/>
</dbReference>
<dbReference type="Gene3D" id="3.20.20.140">
    <property type="entry name" value="Metal-dependent hydrolases"/>
    <property type="match status" value="1"/>
</dbReference>
<dbReference type="HAMAP" id="MF_01902">
    <property type="entry name" value="DNApol_error_prone"/>
    <property type="match status" value="1"/>
</dbReference>
<dbReference type="InterPro" id="IPR011708">
    <property type="entry name" value="DNA_pol3_alpha_NTPase_dom"/>
</dbReference>
<dbReference type="InterPro" id="IPR040982">
    <property type="entry name" value="DNA_pol3_finger"/>
</dbReference>
<dbReference type="InterPro" id="IPR023073">
    <property type="entry name" value="DnaE2"/>
</dbReference>
<dbReference type="InterPro" id="IPR004805">
    <property type="entry name" value="DnaE2/DnaE/PolC"/>
</dbReference>
<dbReference type="InterPro" id="IPR029460">
    <property type="entry name" value="DNAPol_HHH"/>
</dbReference>
<dbReference type="InterPro" id="IPR004013">
    <property type="entry name" value="PHP_dom"/>
</dbReference>
<dbReference type="InterPro" id="IPR003141">
    <property type="entry name" value="Pol/His_phosphatase_N"/>
</dbReference>
<dbReference type="InterPro" id="IPR016195">
    <property type="entry name" value="Pol/histidinol_Pase-like"/>
</dbReference>
<dbReference type="NCBIfam" id="NF004225">
    <property type="entry name" value="PRK05672.1"/>
    <property type="match status" value="1"/>
</dbReference>
<dbReference type="PANTHER" id="PTHR32294">
    <property type="entry name" value="DNA POLYMERASE III SUBUNIT ALPHA"/>
    <property type="match status" value="1"/>
</dbReference>
<dbReference type="PANTHER" id="PTHR32294:SF4">
    <property type="entry name" value="ERROR-PRONE DNA POLYMERASE"/>
    <property type="match status" value="1"/>
</dbReference>
<dbReference type="Pfam" id="PF07733">
    <property type="entry name" value="DNA_pol3_alpha"/>
    <property type="match status" value="1"/>
</dbReference>
<dbReference type="Pfam" id="PF17657">
    <property type="entry name" value="DNA_pol3_finger"/>
    <property type="match status" value="1"/>
</dbReference>
<dbReference type="Pfam" id="PF14579">
    <property type="entry name" value="HHH_6"/>
    <property type="match status" value="1"/>
</dbReference>
<dbReference type="Pfam" id="PF02811">
    <property type="entry name" value="PHP"/>
    <property type="match status" value="1"/>
</dbReference>
<dbReference type="SMART" id="SM00481">
    <property type="entry name" value="POLIIIAc"/>
    <property type="match status" value="1"/>
</dbReference>
<dbReference type="SUPFAM" id="SSF89550">
    <property type="entry name" value="PHP domain-like"/>
    <property type="match status" value="1"/>
</dbReference>
<dbReference type="SUPFAM" id="SSF81585">
    <property type="entry name" value="PsbU/PolX domain-like"/>
    <property type="match status" value="1"/>
</dbReference>
<reference key="1">
    <citation type="journal article" date="2003" name="Nucleic Acids Res.">
        <title>The complete genome sequence and analysis of Corynebacterium diphtheriae NCTC13129.</title>
        <authorList>
            <person name="Cerdeno-Tarraga A.-M."/>
            <person name="Efstratiou A."/>
            <person name="Dover L.G."/>
            <person name="Holden M.T.G."/>
            <person name="Pallen M.J."/>
            <person name="Bentley S.D."/>
            <person name="Besra G.S."/>
            <person name="Churcher C.M."/>
            <person name="James K.D."/>
            <person name="De Zoysa A."/>
            <person name="Chillingworth T."/>
            <person name="Cronin A."/>
            <person name="Dowd L."/>
            <person name="Feltwell T."/>
            <person name="Hamlin N."/>
            <person name="Holroyd S."/>
            <person name="Jagels K."/>
            <person name="Moule S."/>
            <person name="Quail M.A."/>
            <person name="Rabbinowitsch E."/>
            <person name="Rutherford K.M."/>
            <person name="Thomson N.R."/>
            <person name="Unwin L."/>
            <person name="Whitehead S."/>
            <person name="Barrell B.G."/>
            <person name="Parkhill J."/>
        </authorList>
    </citation>
    <scope>NUCLEOTIDE SEQUENCE [LARGE SCALE GENOMIC DNA]</scope>
    <source>
        <strain>ATCC 700971 / NCTC 13129 / Biotype gravis</strain>
    </source>
</reference>
<organism>
    <name type="scientific">Corynebacterium diphtheriae (strain ATCC 700971 / NCTC 13129 / Biotype gravis)</name>
    <dbReference type="NCBI Taxonomy" id="257309"/>
    <lineage>
        <taxon>Bacteria</taxon>
        <taxon>Bacillati</taxon>
        <taxon>Actinomycetota</taxon>
        <taxon>Actinomycetes</taxon>
        <taxon>Mycobacteriales</taxon>
        <taxon>Corynebacteriaceae</taxon>
        <taxon>Corynebacterium</taxon>
    </lineage>
</organism>
<comment type="function">
    <text evidence="1">DNA polymerase involved in damage-induced mutagenesis and translesion synthesis (TLS). It is not the major replicative DNA polymerase.</text>
</comment>
<comment type="catalytic activity">
    <reaction evidence="1">
        <text>DNA(n) + a 2'-deoxyribonucleoside 5'-triphosphate = DNA(n+1) + diphosphate</text>
        <dbReference type="Rhea" id="RHEA:22508"/>
        <dbReference type="Rhea" id="RHEA-COMP:17339"/>
        <dbReference type="Rhea" id="RHEA-COMP:17340"/>
        <dbReference type="ChEBI" id="CHEBI:33019"/>
        <dbReference type="ChEBI" id="CHEBI:61560"/>
        <dbReference type="ChEBI" id="CHEBI:173112"/>
        <dbReference type="EC" id="2.7.7.7"/>
    </reaction>
</comment>
<comment type="subcellular location">
    <subcellularLocation>
        <location evidence="1">Cytoplasm</location>
    </subcellularLocation>
</comment>
<comment type="similarity">
    <text evidence="1">Belongs to the DNA polymerase type-C family. DnaE2 subfamily.</text>
</comment>
<keyword id="KW-0963">Cytoplasm</keyword>
<keyword id="KW-0227">DNA damage</keyword>
<keyword id="KW-0234">DNA repair</keyword>
<keyword id="KW-0235">DNA replication</keyword>
<keyword id="KW-0239">DNA-directed DNA polymerase</keyword>
<keyword id="KW-0548">Nucleotidyltransferase</keyword>
<keyword id="KW-1185">Reference proteome</keyword>
<keyword id="KW-0808">Transferase</keyword>